<reference key="1">
    <citation type="journal article" date="1996" name="Virology">
        <title>Analysis of the nucleotide sequence of the treehopper-transmitted geminivirus, tomato pseudo-curly top virus, suggests a recombinant origin.</title>
        <authorList>
            <person name="Briddon R.W."/>
            <person name="Bedford I.D."/>
            <person name="Tsai J.H."/>
            <person name="Markham P.G."/>
        </authorList>
    </citation>
    <scope>NUCLEOTIDE SEQUENCE [GENOMIC DNA]</scope>
</reference>
<name>REN_TPCTV</name>
<comment type="function">
    <text evidence="1">Increases viral DNA accumulation. Enhances infectivity and symptom expression (By similarity).</text>
</comment>
<comment type="subunit">
    <text evidence="1">Homooligomer. Interacts with the replication-associated protein (REP). Interacts with host proliferating cell nuclear antigen (PCNA). Interacts with host retinoblastoma-related protein 1 (RBR1), and may thereby deregulate the host cell cycle. Oligomerization and interaction with PCNA are necessary for optimal replication enhancement (By similarity).</text>
</comment>
<comment type="similarity">
    <text evidence="2">Belongs to the geminiviridae replication enhancer protein family.</text>
</comment>
<proteinExistence type="inferred from homology"/>
<evidence type="ECO:0000250" key="1"/>
<evidence type="ECO:0000305" key="2"/>
<sequence>MDSRTGELLTYTQCQTGCYFDDIKNPIYFRLQNTTTMATGNKIITLQIRANHNLRKVLGLQICWLNLVVLSVSPRLSGEALLDRFKFHVMKHLNNLGVISINNVIRSINHFIDLFDQRVFYAPSFYYNIKMRLY</sequence>
<dbReference type="EMBL" id="X84735">
    <property type="protein sequence ID" value="CAA59225.1"/>
    <property type="molecule type" value="Genomic_DNA"/>
</dbReference>
<dbReference type="KEGG" id="vg:944409"/>
<dbReference type="OrthoDB" id="13855at10239"/>
<dbReference type="Proteomes" id="UP000007068">
    <property type="component" value="Genome"/>
</dbReference>
<dbReference type="GO" id="GO:0016032">
    <property type="term" value="P:viral process"/>
    <property type="evidence" value="ECO:0007669"/>
    <property type="project" value="InterPro"/>
</dbReference>
<dbReference type="InterPro" id="IPR000657">
    <property type="entry name" value="Gemini_AL3"/>
</dbReference>
<dbReference type="Pfam" id="PF01407">
    <property type="entry name" value="Gemini_AL3"/>
    <property type="match status" value="1"/>
</dbReference>
<dbReference type="PRINTS" id="PR00231">
    <property type="entry name" value="GEMCOATAL3"/>
</dbReference>
<gene>
    <name type="ORF">C3</name>
    <name type="ORF">L3</name>
</gene>
<accession>Q88890</accession>
<organism>
    <name type="scientific">Tomato pseudo-curly top virus</name>
    <name type="common">TPCTV</name>
    <dbReference type="NCBI Taxonomy" id="49267"/>
    <lineage>
        <taxon>Viruses</taxon>
        <taxon>Monodnaviria</taxon>
        <taxon>Shotokuvirae</taxon>
        <taxon>Cressdnaviricota</taxon>
        <taxon>Repensiviricetes</taxon>
        <taxon>Geplafuvirales</taxon>
        <taxon>Geminiviridae</taxon>
        <taxon>Topocuvirus</taxon>
    </lineage>
</organism>
<protein>
    <recommendedName>
        <fullName>Replication enhancer protein</fullName>
        <shortName>REn</shortName>
    </recommendedName>
    <alternativeName>
        <fullName>16.1 kDa protein</fullName>
    </alternativeName>
    <alternativeName>
        <fullName>Protein C3</fullName>
    </alternativeName>
    <alternativeName>
        <fullName>Protein L3</fullName>
    </alternativeName>
</protein>
<organismHost>
    <name type="scientific">Solanum lycopersicum</name>
    <name type="common">Tomato</name>
    <name type="synonym">Lycopersicon esculentum</name>
    <dbReference type="NCBI Taxonomy" id="4081"/>
</organismHost>
<organismHost>
    <name type="scientific">Solanum nigrum</name>
    <name type="common">Black nightshade</name>
    <dbReference type="NCBI Taxonomy" id="4112"/>
</organismHost>
<keyword id="KW-0945">Host-virus interaction</keyword>
<keyword id="KW-1185">Reference proteome</keyword>
<feature type="chain" id="PRO_0000323685" description="Replication enhancer protein">
    <location>
        <begin position="1"/>
        <end position="134"/>
    </location>
</feature>